<dbReference type="EC" id="2.3.1.-" evidence="3"/>
<dbReference type="EMBL" id="AF185569">
    <property type="protein sequence ID" value="AAF22297.1"/>
    <property type="molecule type" value="mRNA"/>
</dbReference>
<dbReference type="EMBL" id="BC078836">
    <property type="protein sequence ID" value="AAH78836.1"/>
    <property type="molecule type" value="mRNA"/>
</dbReference>
<dbReference type="RefSeq" id="NP_067700.2">
    <property type="nucleotide sequence ID" value="NM_021668.3"/>
</dbReference>
<dbReference type="SMR" id="Q9QXT4"/>
<dbReference type="FunCoup" id="Q9QXT4">
    <property type="interactions" value="110"/>
</dbReference>
<dbReference type="STRING" id="10116.ENSRNOP00000072610"/>
<dbReference type="iPTMnet" id="Q9QXT4"/>
<dbReference type="PhosphoSitePlus" id="Q9QXT4"/>
<dbReference type="PaxDb" id="10116-ENSRNOP00000021167"/>
<dbReference type="GeneID" id="59300"/>
<dbReference type="KEGG" id="rno:59300"/>
<dbReference type="UCSC" id="RGD:621606">
    <property type="organism name" value="rat"/>
</dbReference>
<dbReference type="AGR" id="RGD:621606"/>
<dbReference type="CTD" id="66116"/>
<dbReference type="RGD" id="621606">
    <property type="gene designation" value="Nat8f1"/>
</dbReference>
<dbReference type="eggNOG" id="KOG3139">
    <property type="taxonomic scope" value="Eukaryota"/>
</dbReference>
<dbReference type="InParanoid" id="Q9QXT4"/>
<dbReference type="OrthoDB" id="41532at2759"/>
<dbReference type="PhylomeDB" id="Q9QXT4"/>
<dbReference type="TreeFam" id="TF324687"/>
<dbReference type="PRO" id="PR:Q9QXT4"/>
<dbReference type="Proteomes" id="UP000002494">
    <property type="component" value="Unplaced"/>
</dbReference>
<dbReference type="GO" id="GO:0016020">
    <property type="term" value="C:membrane"/>
    <property type="evidence" value="ECO:0000303"/>
    <property type="project" value="UniProtKB"/>
</dbReference>
<dbReference type="GO" id="GO:0008080">
    <property type="term" value="F:N-acetyltransferase activity"/>
    <property type="evidence" value="ECO:0000318"/>
    <property type="project" value="GO_Central"/>
</dbReference>
<dbReference type="GO" id="GO:0001702">
    <property type="term" value="P:gastrulation with mouth forming second"/>
    <property type="evidence" value="ECO:0000303"/>
    <property type="project" value="UniProtKB"/>
</dbReference>
<dbReference type="CDD" id="cd04301">
    <property type="entry name" value="NAT_SF"/>
    <property type="match status" value="1"/>
</dbReference>
<dbReference type="FunFam" id="3.40.630.30:FF:000118">
    <property type="entry name" value="N-acetyltransferase family 8 member 3"/>
    <property type="match status" value="1"/>
</dbReference>
<dbReference type="Gene3D" id="3.40.630.30">
    <property type="match status" value="1"/>
</dbReference>
<dbReference type="InterPro" id="IPR016181">
    <property type="entry name" value="Acyl_CoA_acyltransferase"/>
</dbReference>
<dbReference type="InterPro" id="IPR000182">
    <property type="entry name" value="GNAT_dom"/>
</dbReference>
<dbReference type="InterPro" id="IPR050769">
    <property type="entry name" value="NAT_camello-type"/>
</dbReference>
<dbReference type="PANTHER" id="PTHR13947">
    <property type="entry name" value="GNAT FAMILY N-ACETYLTRANSFERASE"/>
    <property type="match status" value="1"/>
</dbReference>
<dbReference type="PANTHER" id="PTHR13947:SF53">
    <property type="entry name" value="N-ACETYLTRANSFERASE 8B-RELATED"/>
    <property type="match status" value="1"/>
</dbReference>
<dbReference type="Pfam" id="PF00583">
    <property type="entry name" value="Acetyltransf_1"/>
    <property type="match status" value="1"/>
</dbReference>
<dbReference type="SUPFAM" id="SSF55729">
    <property type="entry name" value="Acyl-CoA N-acyltransferases (Nat)"/>
    <property type="match status" value="1"/>
</dbReference>
<dbReference type="PROSITE" id="PS51186">
    <property type="entry name" value="GNAT"/>
    <property type="match status" value="1"/>
</dbReference>
<proteinExistence type="evidence at transcript level"/>
<organism>
    <name type="scientific">Rattus norvegicus</name>
    <name type="common">Rat</name>
    <dbReference type="NCBI Taxonomy" id="10116"/>
    <lineage>
        <taxon>Eukaryota</taxon>
        <taxon>Metazoa</taxon>
        <taxon>Chordata</taxon>
        <taxon>Craniata</taxon>
        <taxon>Vertebrata</taxon>
        <taxon>Euteleostomi</taxon>
        <taxon>Mammalia</taxon>
        <taxon>Eutheria</taxon>
        <taxon>Euarchontoglires</taxon>
        <taxon>Glires</taxon>
        <taxon>Rodentia</taxon>
        <taxon>Myomorpha</taxon>
        <taxon>Muroidea</taxon>
        <taxon>Muridae</taxon>
        <taxon>Murinae</taxon>
        <taxon>Rattus</taxon>
    </lineage>
</organism>
<evidence type="ECO:0000250" key="1">
    <source>
        <dbReference type="UniProtKB" id="Q9JIZ0"/>
    </source>
</evidence>
<evidence type="ECO:0000255" key="2"/>
<evidence type="ECO:0000255" key="3">
    <source>
        <dbReference type="PROSITE-ProRule" id="PRU00532"/>
    </source>
</evidence>
<evidence type="ECO:0000269" key="4">
    <source>
    </source>
</evidence>
<evidence type="ECO:0000303" key="5">
    <source>
    </source>
</evidence>
<evidence type="ECO:0000305" key="6"/>
<evidence type="ECO:0000312" key="7">
    <source>
        <dbReference type="EMBL" id="AAF22297.1"/>
    </source>
</evidence>
<evidence type="ECO:0000312" key="8">
    <source>
        <dbReference type="EMBL" id="AAH78836.1"/>
    </source>
</evidence>
<evidence type="ECO:0000312" key="9">
    <source>
        <dbReference type="RGD" id="621606"/>
    </source>
</evidence>
<accession>Q9QXT4</accession>
<name>CMLO1_RAT</name>
<protein>
    <recommendedName>
        <fullName evidence="6">N-acetyltransferase 8F1</fullName>
        <ecNumber evidence="3">2.3.1.-</ecNumber>
    </recommendedName>
    <alternativeName>
        <fullName evidence="5">Camello-like protein 1</fullName>
    </alternativeName>
    <alternativeName>
        <fullName evidence="5">Camello-like protein 2</fullName>
    </alternativeName>
    <alternativeName>
        <fullName evidence="1">GCN5-related N-acetyltransferase 8, family member 1</fullName>
    </alternativeName>
</protein>
<gene>
    <name evidence="9" type="primary">Nat8f1</name>
    <name evidence="1" type="synonym">Cml1</name>
    <name evidence="9" type="synonym">Cml2</name>
</gene>
<sequence length="221" mass="24857">MAPYHIRQYQDSDHKSVVDVFTKGMEEHIPSTFRHMLMLPRTLLLLLGVPLALVLVSGSWLLAVVCIFFLLLLLRFLAGQPWKEYVATCLRTDMADITKSYLNAHGSFWVAESGNQVVGIVAALPVKDPPSGRKQLQLFRLSVSSQHRGQGIAKALVRTVLQFARDQGYTDVVLETSTLQQGAMTLYLGMGFQKTGQRFLTMFWRLVGIRTIQLKYPFPSA</sequence>
<reference evidence="7" key="1">
    <citation type="journal article" date="2001" name="Dev. Biol.">
        <title>Overexpression of camello, a member of a novel protein family, reduces blastomere adhesion and inhibits gastrulation in Xenopus laevis.</title>
        <authorList>
            <person name="Popsueva A.E."/>
            <person name="Luchinskaya N.N."/>
            <person name="Ludwig A.V."/>
            <person name="Zinovjeva O.Y."/>
            <person name="Poteryaev D.A."/>
            <person name="Feigelman M.M."/>
            <person name="Ponomarev M.B."/>
            <person name="Berekelya L."/>
            <person name="Belyavsky A.V."/>
        </authorList>
    </citation>
    <scope>NUCLEOTIDE SEQUENCE [MRNA]</scope>
    <source>
        <tissue evidence="7">Kidney</tissue>
    </source>
</reference>
<reference evidence="8" key="2">
    <citation type="journal article" date="2004" name="Genome Res.">
        <title>The status, quality, and expansion of the NIH full-length cDNA project: the Mammalian Gene Collection (MGC).</title>
        <authorList>
            <consortium name="The MGC Project Team"/>
        </authorList>
    </citation>
    <scope>NUCLEOTIDE SEQUENCE [LARGE SCALE MRNA]</scope>
    <source>
        <tissue evidence="8">Kidney</tissue>
    </source>
</reference>
<feature type="chain" id="PRO_0000284687" description="N-acetyltransferase 8F1">
    <location>
        <begin position="1"/>
        <end position="221"/>
    </location>
</feature>
<feature type="transmembrane region" description="Helical" evidence="2">
    <location>
        <begin position="53"/>
        <end position="73"/>
    </location>
</feature>
<feature type="domain" description="N-acetyltransferase" evidence="3">
    <location>
        <begin position="69"/>
        <end position="219"/>
    </location>
</feature>
<keyword id="KW-0012">Acyltransferase</keyword>
<keyword id="KW-0217">Developmental protein</keyword>
<keyword id="KW-0306">Gastrulation</keyword>
<keyword id="KW-0472">Membrane</keyword>
<keyword id="KW-1185">Reference proteome</keyword>
<keyword id="KW-0808">Transferase</keyword>
<keyword id="KW-0812">Transmembrane</keyword>
<keyword id="KW-1133">Transmembrane helix</keyword>
<comment type="function">
    <text evidence="4">May play a role in regulation of gastrulation.</text>
</comment>
<comment type="subcellular location">
    <subcellularLocation>
        <location evidence="2">Membrane</location>
        <topology evidence="2">Single-pass membrane protein</topology>
    </subcellularLocation>
</comment>
<comment type="similarity">
    <text evidence="4">Belongs to the camello family.</text>
</comment>